<name>SEC11_AJECN</name>
<comment type="function">
    <text evidence="1 2">Catalytic component of the signal peptidase complex (SPC) which catalyzes the cleavage of N-terminal signal sequences from nascent proteins as they are translocated into the lumen of the endoplasmic reticulum (By similarity). Specifically cleaves N-terminal signal peptides that contain a hydrophobic alpha-helix (h-region) shorter than 18-20 amino acids (By similarity).</text>
</comment>
<comment type="catalytic activity">
    <reaction evidence="1">
        <text>Cleavage of hydrophobic, N-terminal signal or leader sequences from secreted and periplasmic proteins.</text>
        <dbReference type="EC" id="3.4.21.89"/>
    </reaction>
</comment>
<comment type="subunit">
    <text evidence="1 2">Component of the signal peptidase complex (SPC) composed of a catalytic subunit SEC11 and three accessory subunits SPC1, SPC2 and SPC3 (By similarity). The complex induces a local thinning of the ER membrane which is used to measure the length of the signal peptide (SP) h-region of protein substrates. This ensures the selectivity of the complex towards h-regions shorter than 18-20 amino acids (By similarity). SPC associates with the translocon complex (By similarity).</text>
</comment>
<comment type="subcellular location">
    <subcellularLocation>
        <location evidence="1">Endoplasmic reticulum membrane</location>
        <topology evidence="1">Single-pass type II membrane protein</topology>
    </subcellularLocation>
</comment>
<comment type="domain">
    <text evidence="2">The C-terminal short (CTS) helix is essential for catalytic activity. It may be accommodated as a transmembrane helix in the thinned membrane environment of the complex, similarly to the signal peptide in the complex substrates.</text>
</comment>
<comment type="similarity">
    <text evidence="4">Belongs to the peptidase S26B family.</text>
</comment>
<reference key="1">
    <citation type="journal article" date="2009" name="Genome Res.">
        <title>Comparative genomic analyses of the human fungal pathogens Coccidioides and their relatives.</title>
        <authorList>
            <person name="Sharpton T.J."/>
            <person name="Stajich J.E."/>
            <person name="Rounsley S.D."/>
            <person name="Gardner M.J."/>
            <person name="Wortman J.R."/>
            <person name="Jordar V.S."/>
            <person name="Maiti R."/>
            <person name="Kodira C.D."/>
            <person name="Neafsey D.E."/>
            <person name="Zeng Q."/>
            <person name="Hung C.-Y."/>
            <person name="McMahan C."/>
            <person name="Muszewska A."/>
            <person name="Grynberg M."/>
            <person name="Mandel M.A."/>
            <person name="Kellner E.M."/>
            <person name="Barker B.M."/>
            <person name="Galgiani J.N."/>
            <person name="Orbach M.J."/>
            <person name="Kirkland T.N."/>
            <person name="Cole G.T."/>
            <person name="Henn M.R."/>
            <person name="Birren B.W."/>
            <person name="Taylor J.W."/>
        </authorList>
    </citation>
    <scope>NUCLEOTIDE SEQUENCE [LARGE SCALE GENOMIC DNA]</scope>
    <source>
        <strain>NAm1 / WU24</strain>
    </source>
</reference>
<proteinExistence type="inferred from homology"/>
<accession>A6QX24</accession>
<protein>
    <recommendedName>
        <fullName>Signal peptidase complex catalytic subunit SEC11</fullName>
        <ecNumber evidence="1">3.4.21.89</ecNumber>
    </recommendedName>
    <alternativeName>
        <fullName>Signal peptidase I</fullName>
    </alternativeName>
</protein>
<feature type="chain" id="PRO_0000412309" description="Signal peptidase complex catalytic subunit SEC11">
    <location>
        <begin position="1"/>
        <end position="187"/>
    </location>
</feature>
<feature type="topological domain" description="Cytoplasmic" evidence="3">
    <location>
        <begin position="1"/>
        <end position="18"/>
    </location>
</feature>
<feature type="transmembrane region" description="Helical; Signal-anchor for type II membrane protein" evidence="3">
    <location>
        <begin position="19"/>
        <end position="39"/>
    </location>
</feature>
<feature type="topological domain" description="Lumenal" evidence="3">
    <location>
        <begin position="40"/>
        <end position="187"/>
    </location>
</feature>
<feature type="region of interest" description="C-terminal short (CTS) helix" evidence="2">
    <location>
        <begin position="173"/>
        <end position="184"/>
    </location>
</feature>
<feature type="active site" description="Charge relay system" evidence="1">
    <location>
        <position position="53"/>
    </location>
</feature>
<feature type="active site" description="Charge relay system" evidence="1">
    <location>
        <position position="92"/>
    </location>
</feature>
<feature type="active site" description="Charge relay system" evidence="1">
    <location>
        <position position="129"/>
    </location>
</feature>
<feature type="glycosylation site" description="N-linked (GlcNAc...) asparagine" evidence="3">
    <location>
        <position position="125"/>
    </location>
</feature>
<evidence type="ECO:0000250" key="1">
    <source>
        <dbReference type="UniProtKB" id="P15367"/>
    </source>
</evidence>
<evidence type="ECO:0000250" key="2">
    <source>
        <dbReference type="UniProtKB" id="P67812"/>
    </source>
</evidence>
<evidence type="ECO:0000255" key="3"/>
<evidence type="ECO:0000305" key="4"/>
<organism>
    <name type="scientific">Ajellomyces capsulatus (strain NAm1 / WU24)</name>
    <name type="common">Darling's disease fungus</name>
    <name type="synonym">Histoplasma capsulatum</name>
    <dbReference type="NCBI Taxonomy" id="2059318"/>
    <lineage>
        <taxon>Eukaryota</taxon>
        <taxon>Fungi</taxon>
        <taxon>Dikarya</taxon>
        <taxon>Ascomycota</taxon>
        <taxon>Pezizomycotina</taxon>
        <taxon>Eurotiomycetes</taxon>
        <taxon>Eurotiomycetidae</taxon>
        <taxon>Onygenales</taxon>
        <taxon>Ajellomycetaceae</taxon>
        <taxon>Histoplasma</taxon>
    </lineage>
</organism>
<gene>
    <name type="primary">SEC11</name>
    <name type="ORF">HCAG_01931</name>
</gene>
<keyword id="KW-0256">Endoplasmic reticulum</keyword>
<keyword id="KW-0325">Glycoprotein</keyword>
<keyword id="KW-0378">Hydrolase</keyword>
<keyword id="KW-0472">Membrane</keyword>
<keyword id="KW-0645">Protease</keyword>
<keyword id="KW-1185">Reference proteome</keyword>
<keyword id="KW-0735">Signal-anchor</keyword>
<keyword id="KW-0812">Transmembrane</keyword>
<keyword id="KW-1133">Transmembrane helix</keyword>
<dbReference type="EC" id="3.4.21.89" evidence="1"/>
<dbReference type="EMBL" id="CH476655">
    <property type="protein sequence ID" value="EDN04066.1"/>
    <property type="molecule type" value="Genomic_DNA"/>
</dbReference>
<dbReference type="SMR" id="A6QX24"/>
<dbReference type="STRING" id="339724.A6QX24"/>
<dbReference type="MEROPS" id="S26.010"/>
<dbReference type="GlyCosmos" id="A6QX24">
    <property type="glycosylation" value="1 site, No reported glycans"/>
</dbReference>
<dbReference type="KEGG" id="aje:HCAG_01931"/>
<dbReference type="VEuPathDB" id="FungiDB:HCAG_01931"/>
<dbReference type="HOGENOM" id="CLU_089996_0_0_1"/>
<dbReference type="OMA" id="ILMNEYP"/>
<dbReference type="OrthoDB" id="4720at299071"/>
<dbReference type="Proteomes" id="UP000009297">
    <property type="component" value="Unassembled WGS sequence"/>
</dbReference>
<dbReference type="GO" id="GO:0005787">
    <property type="term" value="C:signal peptidase complex"/>
    <property type="evidence" value="ECO:0007669"/>
    <property type="project" value="TreeGrafter"/>
</dbReference>
<dbReference type="GO" id="GO:0004252">
    <property type="term" value="F:serine-type endopeptidase activity"/>
    <property type="evidence" value="ECO:0007669"/>
    <property type="project" value="UniProtKB-EC"/>
</dbReference>
<dbReference type="GO" id="GO:0006465">
    <property type="term" value="P:signal peptide processing"/>
    <property type="evidence" value="ECO:0007669"/>
    <property type="project" value="InterPro"/>
</dbReference>
<dbReference type="CDD" id="cd06530">
    <property type="entry name" value="S26_SPase_I"/>
    <property type="match status" value="1"/>
</dbReference>
<dbReference type="InterPro" id="IPR036286">
    <property type="entry name" value="LexA/Signal_pep-like_sf"/>
</dbReference>
<dbReference type="InterPro" id="IPR019756">
    <property type="entry name" value="Pept_S26A_signal_pept_1_Ser-AS"/>
</dbReference>
<dbReference type="InterPro" id="IPR019533">
    <property type="entry name" value="Peptidase_S26"/>
</dbReference>
<dbReference type="InterPro" id="IPR001733">
    <property type="entry name" value="Peptidase_S26B"/>
</dbReference>
<dbReference type="NCBIfam" id="TIGR02228">
    <property type="entry name" value="sigpep_I_arch"/>
    <property type="match status" value="1"/>
</dbReference>
<dbReference type="PANTHER" id="PTHR10806">
    <property type="entry name" value="SIGNAL PEPTIDASE COMPLEX CATALYTIC SUBUNIT SEC11"/>
    <property type="match status" value="1"/>
</dbReference>
<dbReference type="PANTHER" id="PTHR10806:SF6">
    <property type="entry name" value="SIGNAL PEPTIDASE COMPLEX CATALYTIC SUBUNIT SEC11"/>
    <property type="match status" value="1"/>
</dbReference>
<dbReference type="PRINTS" id="PR00728">
    <property type="entry name" value="SIGNALPTASE"/>
</dbReference>
<dbReference type="SUPFAM" id="SSF51306">
    <property type="entry name" value="LexA/Signal peptidase"/>
    <property type="match status" value="1"/>
</dbReference>
<dbReference type="PROSITE" id="PS00501">
    <property type="entry name" value="SPASE_I_1"/>
    <property type="match status" value="1"/>
</dbReference>
<sequence>MLSSLSPYMANPRNTLSQVLNFGLVLSSAFMVWKALSVITNSASPVVVVLSGSMEPAFQRGDLLFLWNRSPRVDVGEIVVYNVQGKDIPIVHRVMRVFPDVPTTGAKDVEGVEASQKLLTKGDNNLSDDTELYAPGQEFLDRKTDLMGSVRGYVPAIGYVTIMLSEHPWLKSVLLGFMGLMVMLQRE</sequence>